<feature type="chain" id="PRO_0000357134" description="Methylthioribose-1-phosphate isomerase">
    <location>
        <begin position="1"/>
        <end position="346"/>
    </location>
</feature>
<feature type="active site" description="Proton donor" evidence="1">
    <location>
        <position position="237"/>
    </location>
</feature>
<feature type="binding site" evidence="1">
    <location>
        <begin position="50"/>
        <end position="52"/>
    </location>
    <ligand>
        <name>substrate</name>
    </ligand>
</feature>
<feature type="binding site" evidence="1">
    <location>
        <position position="93"/>
    </location>
    <ligand>
        <name>substrate</name>
    </ligand>
</feature>
<feature type="binding site" evidence="1">
    <location>
        <position position="196"/>
    </location>
    <ligand>
        <name>substrate</name>
    </ligand>
</feature>
<feature type="binding site" evidence="1">
    <location>
        <begin position="247"/>
        <end position="248"/>
    </location>
    <ligand>
        <name>substrate</name>
    </ligand>
</feature>
<feature type="site" description="Transition state stabilizer" evidence="1">
    <location>
        <position position="157"/>
    </location>
</feature>
<protein>
    <recommendedName>
        <fullName evidence="1">Methylthioribose-1-phosphate isomerase</fullName>
        <shortName evidence="1">M1Pi</shortName>
        <shortName evidence="1">MTR-1-P isomerase</shortName>
        <ecNumber evidence="1">5.3.1.23</ecNumber>
    </recommendedName>
    <alternativeName>
        <fullName evidence="1">S-methyl-5-thioribose-1-phosphate isomerase</fullName>
    </alternativeName>
</protein>
<accession>Q0AA70</accession>
<dbReference type="EC" id="5.3.1.23" evidence="1"/>
<dbReference type="EMBL" id="CP000453">
    <property type="protein sequence ID" value="ABI56267.1"/>
    <property type="molecule type" value="Genomic_DNA"/>
</dbReference>
<dbReference type="RefSeq" id="WP_011628662.1">
    <property type="nucleotide sequence ID" value="NC_008340.1"/>
</dbReference>
<dbReference type="SMR" id="Q0AA70"/>
<dbReference type="KEGG" id="aeh:Mlg_0913"/>
<dbReference type="eggNOG" id="COG0182">
    <property type="taxonomic scope" value="Bacteria"/>
</dbReference>
<dbReference type="HOGENOM" id="CLU_016218_1_2_6"/>
<dbReference type="OrthoDB" id="9803436at2"/>
<dbReference type="UniPathway" id="UPA00904">
    <property type="reaction ID" value="UER00874"/>
</dbReference>
<dbReference type="Proteomes" id="UP000001962">
    <property type="component" value="Chromosome"/>
</dbReference>
<dbReference type="GO" id="GO:0046523">
    <property type="term" value="F:S-methyl-5-thioribose-1-phosphate isomerase activity"/>
    <property type="evidence" value="ECO:0007669"/>
    <property type="project" value="UniProtKB-UniRule"/>
</dbReference>
<dbReference type="GO" id="GO:0019509">
    <property type="term" value="P:L-methionine salvage from methylthioadenosine"/>
    <property type="evidence" value="ECO:0007669"/>
    <property type="project" value="UniProtKB-UniRule"/>
</dbReference>
<dbReference type="FunFam" id="1.20.120.420:FF:000003">
    <property type="entry name" value="Methylthioribose-1-phosphate isomerase"/>
    <property type="match status" value="1"/>
</dbReference>
<dbReference type="FunFam" id="3.40.50.10470:FF:000006">
    <property type="entry name" value="Methylthioribose-1-phosphate isomerase"/>
    <property type="match status" value="1"/>
</dbReference>
<dbReference type="Gene3D" id="1.20.120.420">
    <property type="entry name" value="translation initiation factor eif-2b, domain 1"/>
    <property type="match status" value="1"/>
</dbReference>
<dbReference type="Gene3D" id="3.40.50.10470">
    <property type="entry name" value="Translation initiation factor eif-2b, domain 2"/>
    <property type="match status" value="1"/>
</dbReference>
<dbReference type="HAMAP" id="MF_01678">
    <property type="entry name" value="Salvage_MtnA"/>
    <property type="match status" value="1"/>
</dbReference>
<dbReference type="InterPro" id="IPR000649">
    <property type="entry name" value="IF-2B-related"/>
</dbReference>
<dbReference type="InterPro" id="IPR005251">
    <property type="entry name" value="IF-M1Pi"/>
</dbReference>
<dbReference type="InterPro" id="IPR042529">
    <property type="entry name" value="IF_2B-like_C"/>
</dbReference>
<dbReference type="InterPro" id="IPR011559">
    <property type="entry name" value="Initiation_fac_2B_a/b/d"/>
</dbReference>
<dbReference type="InterPro" id="IPR027363">
    <property type="entry name" value="M1Pi_N"/>
</dbReference>
<dbReference type="InterPro" id="IPR037171">
    <property type="entry name" value="NagB/RpiA_transferase-like"/>
</dbReference>
<dbReference type="NCBIfam" id="TIGR00524">
    <property type="entry name" value="eIF-2B_rel"/>
    <property type="match status" value="1"/>
</dbReference>
<dbReference type="NCBIfam" id="NF004326">
    <property type="entry name" value="PRK05720.1"/>
    <property type="match status" value="1"/>
</dbReference>
<dbReference type="NCBIfam" id="TIGR00512">
    <property type="entry name" value="salvage_mtnA"/>
    <property type="match status" value="1"/>
</dbReference>
<dbReference type="PANTHER" id="PTHR43475">
    <property type="entry name" value="METHYLTHIORIBOSE-1-PHOSPHATE ISOMERASE"/>
    <property type="match status" value="1"/>
</dbReference>
<dbReference type="PANTHER" id="PTHR43475:SF1">
    <property type="entry name" value="METHYLTHIORIBOSE-1-PHOSPHATE ISOMERASE"/>
    <property type="match status" value="1"/>
</dbReference>
<dbReference type="Pfam" id="PF01008">
    <property type="entry name" value="IF-2B"/>
    <property type="match status" value="1"/>
</dbReference>
<dbReference type="SUPFAM" id="SSF100950">
    <property type="entry name" value="NagB/RpiA/CoA transferase-like"/>
    <property type="match status" value="1"/>
</dbReference>
<gene>
    <name evidence="1" type="primary">mtnA</name>
    <name type="ordered locus">Mlg_0913</name>
</gene>
<organism>
    <name type="scientific">Alkalilimnicola ehrlichii (strain ATCC BAA-1101 / DSM 17681 / MLHE-1)</name>
    <dbReference type="NCBI Taxonomy" id="187272"/>
    <lineage>
        <taxon>Bacteria</taxon>
        <taxon>Pseudomonadati</taxon>
        <taxon>Pseudomonadota</taxon>
        <taxon>Gammaproteobacteria</taxon>
        <taxon>Chromatiales</taxon>
        <taxon>Ectothiorhodospiraceae</taxon>
        <taxon>Alkalilimnicola</taxon>
    </lineage>
</organism>
<reference key="1">
    <citation type="submission" date="2006-08" db="EMBL/GenBank/DDBJ databases">
        <title>Complete sequence of Alkalilimnicola ehrilichei MLHE-1.</title>
        <authorList>
            <person name="Copeland A."/>
            <person name="Lucas S."/>
            <person name="Lapidus A."/>
            <person name="Barry K."/>
            <person name="Detter J.C."/>
            <person name="Glavina del Rio T."/>
            <person name="Hammon N."/>
            <person name="Israni S."/>
            <person name="Dalin E."/>
            <person name="Tice H."/>
            <person name="Pitluck S."/>
            <person name="Sims D."/>
            <person name="Brettin T."/>
            <person name="Bruce D."/>
            <person name="Han C."/>
            <person name="Tapia R."/>
            <person name="Gilna P."/>
            <person name="Schmutz J."/>
            <person name="Larimer F."/>
            <person name="Land M."/>
            <person name="Hauser L."/>
            <person name="Kyrpides N."/>
            <person name="Mikhailova N."/>
            <person name="Oremland R.S."/>
            <person name="Hoeft S.E."/>
            <person name="Switzer-Blum J."/>
            <person name="Kulp T."/>
            <person name="King G."/>
            <person name="Tabita R."/>
            <person name="Witte B."/>
            <person name="Santini J.M."/>
            <person name="Basu P."/>
            <person name="Hollibaugh J.T."/>
            <person name="Xie G."/>
            <person name="Stolz J.F."/>
            <person name="Richardson P."/>
        </authorList>
    </citation>
    <scope>NUCLEOTIDE SEQUENCE [LARGE SCALE GENOMIC DNA]</scope>
    <source>
        <strain>ATCC BAA-1101 / DSM 17681 / MLHE-1</strain>
    </source>
</reference>
<evidence type="ECO:0000255" key="1">
    <source>
        <dbReference type="HAMAP-Rule" id="MF_01678"/>
    </source>
</evidence>
<evidence type="ECO:0000305" key="2"/>
<name>MTNA_ALKEH</name>
<proteinExistence type="inferred from homology"/>
<sequence>MPRNDTVRALDWQGDHLKLLDQRRLPAETVWLDCHSAADTADAIRDMVVRGAPAIGIAAAYGVVLAARAAMARRPADWPAAMAADLARLRSARPTAVNLFWALDRMQQVVDSDPADPLAALEAAAVAIHEDDLTANRRMGELGAHLIPAGAGVLTHCNTGSLATGGYGTALGVIRSAWSGKGLSAVYADETRPWLQGARLTAWELVADGIPVRLIAEGAAPLLMQRGRVDWVIVGADRVAANGDTANKIGTYALALACKAHGVKFMVVAPSSTIDLDCPGGDRIPIEERPPEELLWLGDRRVAAEGAGAWNPVFDVTPAELIDVLVTERGVVTDFGGAGVRALING</sequence>
<comment type="function">
    <text evidence="1">Catalyzes the interconversion of methylthioribose-1-phosphate (MTR-1-P) into methylthioribulose-1-phosphate (MTRu-1-P).</text>
</comment>
<comment type="catalytic activity">
    <reaction evidence="1">
        <text>5-(methylsulfanyl)-alpha-D-ribose 1-phosphate = 5-(methylsulfanyl)-D-ribulose 1-phosphate</text>
        <dbReference type="Rhea" id="RHEA:19989"/>
        <dbReference type="ChEBI" id="CHEBI:58533"/>
        <dbReference type="ChEBI" id="CHEBI:58548"/>
        <dbReference type="EC" id="5.3.1.23"/>
    </reaction>
</comment>
<comment type="pathway">
    <text evidence="1">Amino-acid biosynthesis; L-methionine biosynthesis via salvage pathway; L-methionine from S-methyl-5-thio-alpha-D-ribose 1-phosphate: step 1/6.</text>
</comment>
<comment type="similarity">
    <text evidence="2">Belongs to the eIF-2B alpha/beta/delta subunits family. MtnA subfamily.</text>
</comment>
<keyword id="KW-0028">Amino-acid biosynthesis</keyword>
<keyword id="KW-0413">Isomerase</keyword>
<keyword id="KW-0486">Methionine biosynthesis</keyword>
<keyword id="KW-1185">Reference proteome</keyword>